<proteinExistence type="inferred from homology"/>
<keyword id="KW-0046">Antibiotic resistance</keyword>
<keyword id="KW-1015">Disulfide bond</keyword>
<keyword id="KW-0378">Hydrolase</keyword>
<keyword id="KW-0614">Plasmid</keyword>
<keyword id="KW-0732">Signal</keyword>
<gene>
    <name type="primary">bla</name>
    <name type="synonym">shv2</name>
</gene>
<dbReference type="EC" id="3.5.2.6"/>
<dbReference type="EMBL" id="L47119">
    <property type="protein sequence ID" value="AAA75015.1"/>
    <property type="molecule type" value="Genomic_DNA"/>
</dbReference>
<dbReference type="SMR" id="P0AA00"/>
<dbReference type="CARD" id="ARO:3001061">
    <property type="molecule name" value="SHV-2A"/>
    <property type="mechanism identifier" value="ARO:0001004"/>
    <property type="mechanism name" value="antibiotic inactivation"/>
</dbReference>
<dbReference type="GO" id="GO:0008800">
    <property type="term" value="F:beta-lactamase activity"/>
    <property type="evidence" value="ECO:0007669"/>
    <property type="project" value="UniProtKB-EC"/>
</dbReference>
<dbReference type="GO" id="GO:0030655">
    <property type="term" value="P:beta-lactam antibiotic catabolic process"/>
    <property type="evidence" value="ECO:0007669"/>
    <property type="project" value="InterPro"/>
</dbReference>
<dbReference type="GO" id="GO:0046677">
    <property type="term" value="P:response to antibiotic"/>
    <property type="evidence" value="ECO:0007669"/>
    <property type="project" value="UniProtKB-KW"/>
</dbReference>
<dbReference type="Gene3D" id="3.40.710.10">
    <property type="entry name" value="DD-peptidase/beta-lactamase superfamily"/>
    <property type="match status" value="1"/>
</dbReference>
<dbReference type="InterPro" id="IPR012338">
    <property type="entry name" value="Beta-lactam/transpept-like"/>
</dbReference>
<dbReference type="InterPro" id="IPR045155">
    <property type="entry name" value="Beta-lactam_cat"/>
</dbReference>
<dbReference type="InterPro" id="IPR000871">
    <property type="entry name" value="Beta-lactam_class-A"/>
</dbReference>
<dbReference type="InterPro" id="IPR023650">
    <property type="entry name" value="Beta-lactam_class-A_AS"/>
</dbReference>
<dbReference type="NCBIfam" id="NF033103">
    <property type="entry name" value="bla_class_A"/>
    <property type="match status" value="1"/>
</dbReference>
<dbReference type="NCBIfam" id="NF000285">
    <property type="entry name" value="SHV"/>
    <property type="match status" value="1"/>
</dbReference>
<dbReference type="NCBIfam" id="NF012143">
    <property type="entry name" value="SHV_LEN_OKP"/>
    <property type="match status" value="1"/>
</dbReference>
<dbReference type="PANTHER" id="PTHR35333">
    <property type="entry name" value="BETA-LACTAMASE"/>
    <property type="match status" value="1"/>
</dbReference>
<dbReference type="PANTHER" id="PTHR35333:SF3">
    <property type="entry name" value="BETA-LACTAMASE-TYPE TRANSPEPTIDASE FOLD CONTAINING PROTEIN"/>
    <property type="match status" value="1"/>
</dbReference>
<dbReference type="Pfam" id="PF13354">
    <property type="entry name" value="Beta-lactamase2"/>
    <property type="match status" value="1"/>
</dbReference>
<dbReference type="PRINTS" id="PR00118">
    <property type="entry name" value="BLACTAMASEA"/>
</dbReference>
<dbReference type="SUPFAM" id="SSF56601">
    <property type="entry name" value="beta-lactamase/transpeptidase-like"/>
    <property type="match status" value="1"/>
</dbReference>
<dbReference type="PROSITE" id="PS00146">
    <property type="entry name" value="BETA_LACTAMASE_A"/>
    <property type="match status" value="1"/>
</dbReference>
<comment type="function">
    <text>This enzyme hydrolyzes cefotaxime, ceftazidime and other broad spectrum cephalosporins.</text>
</comment>
<comment type="catalytic activity">
    <reaction evidence="2">
        <text>a beta-lactam + H2O = a substituted beta-amino acid</text>
        <dbReference type="Rhea" id="RHEA:20401"/>
        <dbReference type="ChEBI" id="CHEBI:15377"/>
        <dbReference type="ChEBI" id="CHEBI:35627"/>
        <dbReference type="ChEBI" id="CHEBI:140347"/>
        <dbReference type="EC" id="3.5.2.6"/>
    </reaction>
</comment>
<comment type="miscellaneous">
    <text evidence="4">The class A beta-lactamase family has a specific amino-acid numbering system, sometimes called Ambler or ABL numbering and often misspelt as Amber. A multiple sequence alignment was used to derive a consensus sequence and then the consensus was numbered taking into account insertions and deletions. This allows use of identical numbers, e.g. for active site residues, despite differences in protein length. UniProt always uses natural numbering of residues, hence there appear to be differences in numbering between this entry and some papers.</text>
</comment>
<comment type="similarity">
    <text evidence="3">Belongs to the class-A beta-lactamase family.</text>
</comment>
<geneLocation type="plasmid">
    <name>pHT1</name>
</geneLocation>
<reference key="1">
    <citation type="journal article" date="1990" name="Antimicrob. Agents Chemother.">
        <title>Nucleotide sequence of SHV-2 beta-lactamase gene.</title>
        <authorList>
            <person name="Garbarg-Chenon A."/>
            <person name="Godard V."/>
            <person name="Labia R."/>
            <person name="Nicolas J.C."/>
        </authorList>
    </citation>
    <scope>NUCLEOTIDE SEQUENCE [GENOMIC DNA]</scope>
</reference>
<reference key="2">
    <citation type="journal article" date="1991" name="Biochem. J.">
        <title>A standard numbering scheme for the class A beta-lactamases.</title>
        <authorList>
            <person name="Ambler R.P."/>
            <person name="Coulson A.F."/>
            <person name="Frere J.M."/>
            <person name="Ghuysen J.M."/>
            <person name="Joris B."/>
            <person name="Forsman M."/>
            <person name="Levesque R.C."/>
            <person name="Tiraby G."/>
            <person name="Waley S.G."/>
        </authorList>
    </citation>
    <scope>AMINO ACID NUMBERING SCHEME</scope>
</reference>
<accession>P0AA00</accession>
<accession>P14558</accession>
<organism>
    <name type="scientific">Salmonella typhimurium</name>
    <dbReference type="NCBI Taxonomy" id="90371"/>
    <lineage>
        <taxon>Bacteria</taxon>
        <taxon>Pseudomonadati</taxon>
        <taxon>Pseudomonadota</taxon>
        <taxon>Gammaproteobacteria</taxon>
        <taxon>Enterobacterales</taxon>
        <taxon>Enterobacteriaceae</taxon>
        <taxon>Salmonella</taxon>
    </lineage>
</organism>
<evidence type="ECO:0000250" key="1"/>
<evidence type="ECO:0000255" key="2">
    <source>
        <dbReference type="PROSITE-ProRule" id="PRU10101"/>
    </source>
</evidence>
<evidence type="ECO:0000305" key="3"/>
<evidence type="ECO:0000305" key="4">
    <source>
    </source>
</evidence>
<sequence length="286" mass="31269">MRYIRLCIISLLATLPLAVHASPQPLEQIKQSESQLSGRVGMIEMDLASGRTLTAWRADERFPMMSTFKVVLCGAVLARVDAGDEQLERKIHYRQQDLVDYSPVSEKHLADGMTVGELCAAAITMSDNSAANLLLATVGGPAGLTAFLRQIGDNVTRLDRWETELNEALPGDARDTTTPASMAATLRKLLTSQRLSARSQRQLLQWMVDDRVAGPLIRSVLPAGWFIADKTGASERGARGIVALLGPNNKAERIVVIYLRDTPASMAERNQQIAGIGAALIEHWQR</sequence>
<protein>
    <recommendedName>
        <fullName>Beta-lactamase SHV-2</fullName>
        <ecNumber>3.5.2.6</ecNumber>
    </recommendedName>
    <alternativeName>
        <fullName>SHV-2A</fullName>
    </alternativeName>
</protein>
<name>BLA2_SALTM</name>
<feature type="signal peptide" evidence="1">
    <location>
        <begin position="1"/>
        <end position="21"/>
    </location>
</feature>
<feature type="chain" id="PRO_0000041959" description="Beta-lactamase SHV-2">
    <location>
        <begin position="22"/>
        <end position="286"/>
    </location>
</feature>
<feature type="active site" description="Acyl-ester intermediate" evidence="2">
    <location>
        <position position="66"/>
    </location>
</feature>
<feature type="active site" description="Proton acceptor" evidence="1">
    <location>
        <position position="164"/>
    </location>
</feature>
<feature type="binding site" evidence="1">
    <location>
        <begin position="230"/>
        <end position="232"/>
    </location>
    <ligand>
        <name>substrate</name>
    </ligand>
</feature>
<feature type="disulfide bond" evidence="1">
    <location>
        <begin position="73"/>
        <end position="119"/>
    </location>
</feature>